<comment type="function">
    <text evidence="1">Involved in the biosynthesis of 3-amino-5-hydroxybenzoate (AHBA), a compound that then serves as the starter unit for the assembly of a polyketide during the biosynthesis of rifamycin B and other ansamycin antibiotics. Catalyzes only the phosphorylation of kanosamine to yield kanosamine 6-phosphate.</text>
</comment>
<comment type="catalytic activity">
    <reaction evidence="1">
        <text>kanosamine + ATP = D-kanosamine 6-phosphate + ADP + H(+)</text>
        <dbReference type="Rhea" id="RHEA:35751"/>
        <dbReference type="ChEBI" id="CHEBI:15378"/>
        <dbReference type="ChEBI" id="CHEBI:30616"/>
        <dbReference type="ChEBI" id="CHEBI:72732"/>
        <dbReference type="ChEBI" id="CHEBI:72748"/>
        <dbReference type="ChEBI" id="CHEBI:456216"/>
        <dbReference type="EC" id="2.7.1.179"/>
    </reaction>
</comment>
<comment type="activity regulation">
    <text evidence="1">Inhibited by Zn(2+), Cu(2+), and Fe(2+).</text>
</comment>
<comment type="biophysicochemical properties">
    <kinetics>
        <KM evidence="1">0.39 mM for kanosamine (at 37 degrees Celsius and pH 7.2)</KM>
        <KM evidence="1">1.9 mM for ATP (at 37 degrees Celsius and pH 7.2)</KM>
        <Vmax evidence="1">0.6 mmol/min/mg enzyme (at 37 degrees Celsius and pH 7.2)</Vmax>
    </kinetics>
</comment>
<comment type="pathway">
    <text>Antibiotic biosynthesis; rifamycin B biosynthesis.</text>
</comment>
<comment type="similarity">
    <text evidence="2">Belongs to the ROK (NagC/XylR) family.</text>
</comment>
<accession>G0FS68</accession>
<sequence>MGTPYHLGIDVGGTKVAFRVESGSACIEETSFSWGARHSAEDDLAQLAGHVARLRERIGTPLEAVGVAMPGTVGADGRVATWPSRPEWTGVDLKTALHSLFPEAAVAWADDGDLGALAESRASGCENLLYIGIGTGIGGGLVLGGVPCPGLGRGSFEIGHVIVEMGGVRCVCGRRGCLQALASGPATLRRASLLRGADVTYYRLQRALRNGEPWAADALEGSTRALAAAVTGVQELVHPDRVLIGGGFAAGIPEIVPSVSGFLADLVRQGQAPLPVEPAALGGLSSLRGAVALAGLVAAGEVP</sequence>
<organism>
    <name type="scientific">Amycolatopsis mediterranei (strain S699)</name>
    <name type="common">Nocardia mediterranei</name>
    <dbReference type="NCBI Taxonomy" id="713604"/>
    <lineage>
        <taxon>Bacteria</taxon>
        <taxon>Bacillati</taxon>
        <taxon>Actinomycetota</taxon>
        <taxon>Actinomycetes</taxon>
        <taxon>Pseudonocardiales</taxon>
        <taxon>Pseudonocardiaceae</taxon>
        <taxon>Amycolatopsis</taxon>
    </lineage>
</organism>
<keyword id="KW-0045">Antibiotic biosynthesis</keyword>
<keyword id="KW-0067">ATP-binding</keyword>
<keyword id="KW-0418">Kinase</keyword>
<keyword id="KW-0547">Nucleotide-binding</keyword>
<keyword id="KW-0808">Transferase</keyword>
<protein>
    <recommendedName>
        <fullName>Kanosamine kinase</fullName>
        <ecNumber>2.7.1.179</ecNumber>
    </recommendedName>
</protein>
<proteinExistence type="evidence at protein level"/>
<feature type="chain" id="PRO_0000425287" description="Kanosamine kinase">
    <location>
        <begin position="1"/>
        <end position="303"/>
    </location>
</feature>
<reference key="1">
    <citation type="journal article" date="2011" name="J. Bacteriol.">
        <title>Whole genome sequence of the rifamycin B-producing strain Amycolatopsis mediterranei S699.</title>
        <authorList>
            <person name="Verma M."/>
            <person name="Kaur J."/>
            <person name="Kumar M."/>
            <person name="Kumari K."/>
            <person name="Saxena A."/>
            <person name="Anand S."/>
            <person name="Nigam A."/>
            <person name="Ravi V."/>
            <person name="Raghuvanshi S."/>
            <person name="Khurana P."/>
            <person name="Tyagi A.K."/>
            <person name="Khurana J.P."/>
            <person name="Lal R."/>
        </authorList>
    </citation>
    <scope>NUCLEOTIDE SEQUENCE [LARGE SCALE GENOMIC DNA]</scope>
    <source>
        <strain>S699</strain>
    </source>
</reference>
<reference key="2">
    <citation type="journal article" date="2012" name="J. Bacteriol.">
        <title>Complete genome sequence of Amycolatopsis mediterranei S699 based on de novo assembly via a combinatorial sequencing strategy.</title>
        <authorList>
            <person name="Tang B."/>
            <person name="Zhao W."/>
            <person name="Zheng H."/>
            <person name="Zhuo Y."/>
            <person name="Zhang L."/>
            <person name="Zhao G.P."/>
        </authorList>
    </citation>
    <scope>NUCLEOTIDE SEQUENCE [LARGE SCALE GENOMIC DNA]</scope>
    <source>
        <strain>S699</strain>
    </source>
</reference>
<reference key="3">
    <citation type="journal article" date="2002" name="J. Am. Chem. Soc.">
        <title>Characterization of the early stage aminoshikimate pathway in the formation of 3-amino-5-hydroxybenzoic acid: the RifN protein specifically converts kanosamine into kanosamine 6-phosphate.</title>
        <authorList>
            <person name="Arakawa K."/>
            <person name="Muller R."/>
            <person name="Mahmud T."/>
            <person name="Yu T.W."/>
            <person name="Floss H.G."/>
        </authorList>
    </citation>
    <scope>FUNCTION</scope>
    <scope>CATALYTIC ACTIVITY</scope>
    <scope>BIOPHYSICOCHEMICAL PROPERTIES</scope>
    <scope>ACTIVITY REGULATION</scope>
    <scope>SUBSTRATE SPECIFICITY</scope>
    <source>
        <strain>S699</strain>
    </source>
</reference>
<dbReference type="EC" id="2.7.1.179"/>
<dbReference type="EMBL" id="CP002896">
    <property type="protein sequence ID" value="AEK39136.1"/>
    <property type="molecule type" value="Genomic_DNA"/>
</dbReference>
<dbReference type="EMBL" id="CP003729">
    <property type="protein sequence ID" value="AFO74164.1"/>
    <property type="molecule type" value="Genomic_DNA"/>
</dbReference>
<dbReference type="RefSeq" id="WP_013222560.1">
    <property type="nucleotide sequence ID" value="NC_018266.1"/>
</dbReference>
<dbReference type="SMR" id="G0FS68"/>
<dbReference type="STRING" id="713604.RAM_03220"/>
<dbReference type="GeneID" id="92868432"/>
<dbReference type="KEGG" id="amm:AMES_0628"/>
<dbReference type="KEGG" id="amn:RAM_03220"/>
<dbReference type="PATRIC" id="fig|713604.12.peg.669"/>
<dbReference type="HOGENOM" id="CLU_036604_0_4_11"/>
<dbReference type="BRENDA" id="2.7.1.179">
    <property type="organism ID" value="313"/>
</dbReference>
<dbReference type="SABIO-RK" id="G0FS68"/>
<dbReference type="UniPathway" id="UPA01029"/>
<dbReference type="Proteomes" id="UP000006138">
    <property type="component" value="Chromosome"/>
</dbReference>
<dbReference type="GO" id="GO:0005524">
    <property type="term" value="F:ATP binding"/>
    <property type="evidence" value="ECO:0007669"/>
    <property type="project" value="UniProtKB-KW"/>
</dbReference>
<dbReference type="GO" id="GO:0016301">
    <property type="term" value="F:kinase activity"/>
    <property type="evidence" value="ECO:0007669"/>
    <property type="project" value="UniProtKB-KW"/>
</dbReference>
<dbReference type="GO" id="GO:0016773">
    <property type="term" value="F:phosphotransferase activity, alcohol group as acceptor"/>
    <property type="evidence" value="ECO:0000314"/>
    <property type="project" value="UniProtKB"/>
</dbReference>
<dbReference type="GO" id="GO:0017000">
    <property type="term" value="P:antibiotic biosynthetic process"/>
    <property type="evidence" value="ECO:0000314"/>
    <property type="project" value="UniProtKB"/>
</dbReference>
<dbReference type="FunFam" id="3.30.420.40:FF:000510">
    <property type="entry name" value="Kanosamine kinase"/>
    <property type="match status" value="1"/>
</dbReference>
<dbReference type="Gene3D" id="3.30.420.40">
    <property type="match status" value="2"/>
</dbReference>
<dbReference type="InterPro" id="IPR043129">
    <property type="entry name" value="ATPase_NBD"/>
</dbReference>
<dbReference type="InterPro" id="IPR000600">
    <property type="entry name" value="ROK"/>
</dbReference>
<dbReference type="PANTHER" id="PTHR18964:SF149">
    <property type="entry name" value="BIFUNCTIONAL UDP-N-ACETYLGLUCOSAMINE 2-EPIMERASE_N-ACETYLMANNOSAMINE KINASE"/>
    <property type="match status" value="1"/>
</dbReference>
<dbReference type="PANTHER" id="PTHR18964">
    <property type="entry name" value="ROK (REPRESSOR, ORF, KINASE) FAMILY"/>
    <property type="match status" value="1"/>
</dbReference>
<dbReference type="Pfam" id="PF00480">
    <property type="entry name" value="ROK"/>
    <property type="match status" value="1"/>
</dbReference>
<dbReference type="SUPFAM" id="SSF53067">
    <property type="entry name" value="Actin-like ATPase domain"/>
    <property type="match status" value="1"/>
</dbReference>
<gene>
    <name type="primary">rifN</name>
    <name type="ordered locus">AMES_0628</name>
    <name type="ordered locus">RAM_03220</name>
</gene>
<evidence type="ECO:0000269" key="1">
    <source>
    </source>
</evidence>
<evidence type="ECO:0000305" key="2"/>
<name>RIFN_AMYMS</name>